<evidence type="ECO:0000255" key="1">
    <source>
        <dbReference type="HAMAP-Rule" id="MF_00227"/>
    </source>
</evidence>
<organism>
    <name type="scientific">Staphylococcus aureus (strain bovine RF122 / ET3-1)</name>
    <dbReference type="NCBI Taxonomy" id="273036"/>
    <lineage>
        <taxon>Bacteria</taxon>
        <taxon>Bacillati</taxon>
        <taxon>Bacillota</taxon>
        <taxon>Bacilli</taxon>
        <taxon>Bacillales</taxon>
        <taxon>Staphylococcaceae</taxon>
        <taxon>Staphylococcus</taxon>
    </lineage>
</organism>
<sequence length="117" mass="13626">MLLEKAYRIKKNADFQRIYKKGHSVANRQFVVYTCNNKEIDHFRLGISVSKKLGNAVLRNKIKRAIRENFKVHKSHILAKDIIVIARQPAKDMTTLQIQNSLEHVLKIAKVFNKKSK</sequence>
<proteinExistence type="inferred from homology"/>
<dbReference type="EC" id="3.1.26.5" evidence="1"/>
<dbReference type="EMBL" id="AJ938182">
    <property type="protein sequence ID" value="CAI82277.1"/>
    <property type="molecule type" value="Genomic_DNA"/>
</dbReference>
<dbReference type="RefSeq" id="WP_011382417.1">
    <property type="nucleotide sequence ID" value="NC_007622.1"/>
</dbReference>
<dbReference type="SMR" id="Q2YZB7"/>
<dbReference type="KEGG" id="sab:SAB2589c"/>
<dbReference type="HOGENOM" id="CLU_117179_9_1_9"/>
<dbReference type="GO" id="GO:0030677">
    <property type="term" value="C:ribonuclease P complex"/>
    <property type="evidence" value="ECO:0007669"/>
    <property type="project" value="TreeGrafter"/>
</dbReference>
<dbReference type="GO" id="GO:0042781">
    <property type="term" value="F:3'-tRNA processing endoribonuclease activity"/>
    <property type="evidence" value="ECO:0007669"/>
    <property type="project" value="TreeGrafter"/>
</dbReference>
<dbReference type="GO" id="GO:0004526">
    <property type="term" value="F:ribonuclease P activity"/>
    <property type="evidence" value="ECO:0007669"/>
    <property type="project" value="UniProtKB-UniRule"/>
</dbReference>
<dbReference type="GO" id="GO:0000049">
    <property type="term" value="F:tRNA binding"/>
    <property type="evidence" value="ECO:0007669"/>
    <property type="project" value="UniProtKB-UniRule"/>
</dbReference>
<dbReference type="GO" id="GO:0001682">
    <property type="term" value="P:tRNA 5'-leader removal"/>
    <property type="evidence" value="ECO:0007669"/>
    <property type="project" value="UniProtKB-UniRule"/>
</dbReference>
<dbReference type="FunFam" id="3.30.230.10:FF:000021">
    <property type="entry name" value="Ribonuclease P protein component"/>
    <property type="match status" value="1"/>
</dbReference>
<dbReference type="Gene3D" id="3.30.230.10">
    <property type="match status" value="1"/>
</dbReference>
<dbReference type="HAMAP" id="MF_00227">
    <property type="entry name" value="RNase_P"/>
    <property type="match status" value="1"/>
</dbReference>
<dbReference type="InterPro" id="IPR020568">
    <property type="entry name" value="Ribosomal_Su5_D2-typ_SF"/>
</dbReference>
<dbReference type="InterPro" id="IPR014721">
    <property type="entry name" value="Ribsml_uS5_D2-typ_fold_subgr"/>
</dbReference>
<dbReference type="InterPro" id="IPR000100">
    <property type="entry name" value="RNase_P"/>
</dbReference>
<dbReference type="InterPro" id="IPR020539">
    <property type="entry name" value="RNase_P_CS"/>
</dbReference>
<dbReference type="NCBIfam" id="TIGR00188">
    <property type="entry name" value="rnpA"/>
    <property type="match status" value="1"/>
</dbReference>
<dbReference type="PANTHER" id="PTHR33992">
    <property type="entry name" value="RIBONUCLEASE P PROTEIN COMPONENT"/>
    <property type="match status" value="1"/>
</dbReference>
<dbReference type="PANTHER" id="PTHR33992:SF1">
    <property type="entry name" value="RIBONUCLEASE P PROTEIN COMPONENT"/>
    <property type="match status" value="1"/>
</dbReference>
<dbReference type="Pfam" id="PF00825">
    <property type="entry name" value="Ribonuclease_P"/>
    <property type="match status" value="1"/>
</dbReference>
<dbReference type="SUPFAM" id="SSF54211">
    <property type="entry name" value="Ribosomal protein S5 domain 2-like"/>
    <property type="match status" value="1"/>
</dbReference>
<dbReference type="PROSITE" id="PS00648">
    <property type="entry name" value="RIBONUCLEASE_P"/>
    <property type="match status" value="1"/>
</dbReference>
<keyword id="KW-0255">Endonuclease</keyword>
<keyword id="KW-0378">Hydrolase</keyword>
<keyword id="KW-0540">Nuclease</keyword>
<keyword id="KW-0694">RNA-binding</keyword>
<keyword id="KW-0819">tRNA processing</keyword>
<accession>Q2YZB7</accession>
<gene>
    <name evidence="1" type="primary">rnpA</name>
    <name type="ordered locus">SAB2589c</name>
</gene>
<protein>
    <recommendedName>
        <fullName evidence="1">Ribonuclease P protein component</fullName>
        <shortName evidence="1">RNase P protein</shortName>
        <shortName evidence="1">RNaseP protein</shortName>
        <ecNumber evidence="1">3.1.26.5</ecNumber>
    </recommendedName>
    <alternativeName>
        <fullName evidence="1">Protein C5</fullName>
    </alternativeName>
</protein>
<feature type="chain" id="PRO_1000021472" description="Ribonuclease P protein component">
    <location>
        <begin position="1"/>
        <end position="117"/>
    </location>
</feature>
<comment type="function">
    <text evidence="1">RNaseP catalyzes the removal of the 5'-leader sequence from pre-tRNA to produce the mature 5'-terminus. It can also cleave other RNA substrates such as 4.5S RNA. The protein component plays an auxiliary but essential role in vivo by binding to the 5'-leader sequence and broadening the substrate specificity of the ribozyme.</text>
</comment>
<comment type="catalytic activity">
    <reaction evidence="1">
        <text>Endonucleolytic cleavage of RNA, removing 5'-extranucleotides from tRNA precursor.</text>
        <dbReference type="EC" id="3.1.26.5"/>
    </reaction>
</comment>
<comment type="subunit">
    <text evidence="1">Consists of a catalytic RNA component (M1 or rnpB) and a protein subunit.</text>
</comment>
<comment type="similarity">
    <text evidence="1">Belongs to the RnpA family.</text>
</comment>
<name>RNPA_STAAB</name>
<reference key="1">
    <citation type="journal article" date="2007" name="PLoS ONE">
        <title>Molecular correlates of host specialization in Staphylococcus aureus.</title>
        <authorList>
            <person name="Herron-Olson L."/>
            <person name="Fitzgerald J.R."/>
            <person name="Musser J.M."/>
            <person name="Kapur V."/>
        </authorList>
    </citation>
    <scope>NUCLEOTIDE SEQUENCE [LARGE SCALE GENOMIC DNA]</scope>
    <source>
        <strain>bovine RF122 / ET3-1</strain>
    </source>
</reference>